<reference key="1">
    <citation type="journal article" date="2007" name="Proc. Natl. Acad. Sci. U.S.A.">
        <title>Dandruff-associated Malassezia genomes reveal convergent and divergent virulence traits shared with plant and human fungal pathogens.</title>
        <authorList>
            <person name="Xu J."/>
            <person name="Saunders C.W."/>
            <person name="Hu P."/>
            <person name="Grant R.A."/>
            <person name="Boekhout T."/>
            <person name="Kuramae E.E."/>
            <person name="Kronstad J.W."/>
            <person name="DeAngelis Y.M."/>
            <person name="Reeder N.L."/>
            <person name="Johnstone K.R."/>
            <person name="Leland M."/>
            <person name="Fieno A.M."/>
            <person name="Begley W.M."/>
            <person name="Sun Y."/>
            <person name="Lacey M.P."/>
            <person name="Chaudhary T."/>
            <person name="Keough T."/>
            <person name="Chu L."/>
            <person name="Sears R."/>
            <person name="Yuan B."/>
            <person name="Dawson T.L. Jr."/>
        </authorList>
    </citation>
    <scope>NUCLEOTIDE SEQUENCE [LARGE SCALE GENOMIC DNA]</scope>
    <scope>IDENTIFICATION</scope>
    <scope>FUNCTION</scope>
    <scope>SUBCELLULAR LOCATION</scope>
    <source>
        <strain>ATCC MYA-4612 / CBS 7966</strain>
    </source>
</reference>
<reference key="2">
    <citation type="journal article" date="2016" name="Microbiology">
        <title>Secreted lipases from Malassezia globosa: recombinant expression and determination of their substrate specificities.</title>
        <authorList>
            <person name="Sommer B."/>
            <person name="Overy D.P."/>
            <person name="Haltli B."/>
            <person name="Kerr R.G."/>
        </authorList>
    </citation>
    <scope>FUNCTION</scope>
    <scope>CATALYTIC ACTIVITY</scope>
    <scope>SUBSTRATE SPECIFICITY</scope>
</reference>
<organism>
    <name type="scientific">Malassezia globosa (strain ATCC MYA-4612 / CBS 7966)</name>
    <name type="common">Dandruff-associated fungus</name>
    <dbReference type="NCBI Taxonomy" id="425265"/>
    <lineage>
        <taxon>Eukaryota</taxon>
        <taxon>Fungi</taxon>
        <taxon>Dikarya</taxon>
        <taxon>Basidiomycota</taxon>
        <taxon>Ustilaginomycotina</taxon>
        <taxon>Malasseziomycetes</taxon>
        <taxon>Malasseziales</taxon>
        <taxon>Malasseziaceae</taxon>
        <taxon>Malassezia</taxon>
    </lineage>
</organism>
<comment type="function">
    <text evidence="4 5">Secreted lipase involved in Dandruff and seborrheic dermatitis (D/SD) probably via lipase-mediated breakdown of sebaceous lipids and release of irritating free fatty acids (PubMed:18000048). Has triacylglycerol lipase activity and is able to hydrolyze triolein (PubMed:27130210). Mostly converts monoolein to di- and triolein, while free fatty acids are only produced in low amounts (PubMed:27130210).</text>
</comment>
<comment type="catalytic activity">
    <reaction evidence="5">
        <text>a triacylglycerol + H2O = a diacylglycerol + a fatty acid + H(+)</text>
        <dbReference type="Rhea" id="RHEA:12044"/>
        <dbReference type="ChEBI" id="CHEBI:15377"/>
        <dbReference type="ChEBI" id="CHEBI:15378"/>
        <dbReference type="ChEBI" id="CHEBI:17855"/>
        <dbReference type="ChEBI" id="CHEBI:18035"/>
        <dbReference type="ChEBI" id="CHEBI:28868"/>
        <dbReference type="EC" id="3.1.1.3"/>
    </reaction>
</comment>
<comment type="catalytic activity">
    <reaction evidence="5">
        <text>a monoacylglycerol + H2O = glycerol + a fatty acid + H(+)</text>
        <dbReference type="Rhea" id="RHEA:15245"/>
        <dbReference type="ChEBI" id="CHEBI:15377"/>
        <dbReference type="ChEBI" id="CHEBI:15378"/>
        <dbReference type="ChEBI" id="CHEBI:17408"/>
        <dbReference type="ChEBI" id="CHEBI:17754"/>
        <dbReference type="ChEBI" id="CHEBI:28868"/>
    </reaction>
</comment>
<comment type="catalytic activity">
    <reaction evidence="5">
        <text>a diacylglycerol + H2O = a monoacylglycerol + a fatty acid + H(+)</text>
        <dbReference type="Rhea" id="RHEA:32731"/>
        <dbReference type="ChEBI" id="CHEBI:15377"/>
        <dbReference type="ChEBI" id="CHEBI:15378"/>
        <dbReference type="ChEBI" id="CHEBI:17408"/>
        <dbReference type="ChEBI" id="CHEBI:18035"/>
        <dbReference type="ChEBI" id="CHEBI:28868"/>
    </reaction>
</comment>
<comment type="subcellular location">
    <subcellularLocation>
        <location evidence="4">Secreted</location>
    </subcellularLocation>
    <subcellularLocation>
        <location evidence="4">Secreted</location>
        <location evidence="4">Cell wall</location>
    </subcellularLocation>
</comment>
<comment type="similarity">
    <text evidence="7">Belongs to the AB hydrolase superfamily. Lipase family. Class Lip subfamily.</text>
</comment>
<dbReference type="EC" id="3.1.1.-" evidence="5"/>
<dbReference type="EC" id="3.1.1.3" evidence="5"/>
<dbReference type="EMBL" id="AAYY01000004">
    <property type="protein sequence ID" value="EDP43914.1"/>
    <property type="molecule type" value="Genomic_DNA"/>
</dbReference>
<dbReference type="RefSeq" id="XP_001731128.1">
    <property type="nucleotide sequence ID" value="XM_001731076.1"/>
</dbReference>
<dbReference type="SMR" id="A8PX35"/>
<dbReference type="ESTHER" id="malgo-a8px35">
    <property type="family name" value="Fungal-Bact_LIP"/>
</dbReference>
<dbReference type="GeneID" id="5855858"/>
<dbReference type="KEGG" id="mgl:MGL_1311"/>
<dbReference type="VEuPathDB" id="FungiDB:MGL_1311"/>
<dbReference type="InParanoid" id="A8PX35"/>
<dbReference type="OrthoDB" id="2373480at2759"/>
<dbReference type="Proteomes" id="UP000008837">
    <property type="component" value="Unassembled WGS sequence"/>
</dbReference>
<dbReference type="GO" id="GO:0005576">
    <property type="term" value="C:extracellular region"/>
    <property type="evidence" value="ECO:0007669"/>
    <property type="project" value="UniProtKB-SubCell"/>
</dbReference>
<dbReference type="GO" id="GO:0004806">
    <property type="term" value="F:triacylglycerol lipase activity"/>
    <property type="evidence" value="ECO:0007669"/>
    <property type="project" value="InterPro"/>
</dbReference>
<dbReference type="GO" id="GO:0016042">
    <property type="term" value="P:lipid catabolic process"/>
    <property type="evidence" value="ECO:0007669"/>
    <property type="project" value="UniProtKB-KW"/>
</dbReference>
<dbReference type="Gene3D" id="1.10.260.130">
    <property type="match status" value="1"/>
</dbReference>
<dbReference type="Gene3D" id="3.40.50.1820">
    <property type="entry name" value="alpha/beta hydrolase"/>
    <property type="match status" value="1"/>
</dbReference>
<dbReference type="InterPro" id="IPR029058">
    <property type="entry name" value="AB_hydrolase_fold"/>
</dbReference>
<dbReference type="InterPro" id="IPR005152">
    <property type="entry name" value="Lipase_secreted"/>
</dbReference>
<dbReference type="PANTHER" id="PTHR34853">
    <property type="match status" value="1"/>
</dbReference>
<dbReference type="PANTHER" id="PTHR34853:SF1">
    <property type="entry name" value="LIPASE 5"/>
    <property type="match status" value="1"/>
</dbReference>
<dbReference type="Pfam" id="PF03583">
    <property type="entry name" value="LIP"/>
    <property type="match status" value="1"/>
</dbReference>
<dbReference type="PIRSF" id="PIRSF029171">
    <property type="entry name" value="Esterase_LipA"/>
    <property type="match status" value="1"/>
</dbReference>
<dbReference type="SUPFAM" id="SSF53474">
    <property type="entry name" value="alpha/beta-Hydrolases"/>
    <property type="match status" value="1"/>
</dbReference>
<sequence length="455" mass="50207">MKLNLFILGLLTLAAHAYALVARDKLLLPHEDPFFQPPDGWQDKEVGTILRSRKVTIKTLVKDNLKEAWQLLYRTTYTSDDEPTTTVTTVMVPHNAQNDSLVLFADFEDSSADRCAPSYSWRAGSLDDPSASTRVAIAMLYLQEGYIVTMPDKEGNRGAFGSGHVEGRQSLDGIRATLAFDKLGLSKDTRVAGHGYSGGGIQIGWAASLKKTYAPELNVVGWSAGGVPSNLTALIEKINGSPFAGFVVAGLTGVSSTYPEVKEYMEKVFTKQGLEDMEFPKKFCSTGIVLRFLFKDFFAKDFSKVGDRYLYEPVVRNILEKLTMGTNPDYTPDAPMLLMQAKNDEVAPYEAVKKTYDSWCQEGAQVHLVTLNNPLSSHASTTVTSSLPGFLWVRDRLQGKLAESGCHENKNFDVGINTNALGEDFKGILGILQGFLGDKIGPNDEYLIDWFKKHK</sequence>
<proteinExistence type="evidence at protein level"/>
<name>LIP4_MALGO</name>
<keyword id="KW-0134">Cell wall</keyword>
<keyword id="KW-1015">Disulfide bond</keyword>
<keyword id="KW-0325">Glycoprotein</keyword>
<keyword id="KW-0378">Hydrolase</keyword>
<keyword id="KW-0442">Lipid degradation</keyword>
<keyword id="KW-0443">Lipid metabolism</keyword>
<keyword id="KW-1185">Reference proteome</keyword>
<keyword id="KW-0964">Secreted</keyword>
<keyword id="KW-0732">Signal</keyword>
<keyword id="KW-0843">Virulence</keyword>
<gene>
    <name evidence="6" type="primary">LIP4</name>
    <name type="ORF">MGL_1311</name>
</gene>
<feature type="signal peptide" evidence="2">
    <location>
        <begin position="1"/>
        <end position="19"/>
    </location>
</feature>
<feature type="chain" id="PRO_5013434223" description="Secreted triacylglycerol lipase LIP4">
    <location>
        <begin position="20"/>
        <end position="455"/>
    </location>
</feature>
<feature type="active site" description="Nucleophile" evidence="8">
    <location>
        <position position="197"/>
    </location>
</feature>
<feature type="active site" evidence="8">
    <location>
        <position position="344"/>
    </location>
</feature>
<feature type="active site" evidence="8">
    <location>
        <position position="378"/>
    </location>
</feature>
<feature type="glycosylation site" description="N-linked (GlcNAc...) asparagine" evidence="3">
    <location>
        <position position="98"/>
    </location>
</feature>
<feature type="glycosylation site" description="N-linked (GlcNAc...) asparagine" evidence="3">
    <location>
        <position position="230"/>
    </location>
</feature>
<feature type="disulfide bond" evidence="1">
    <location>
        <begin position="115"/>
        <end position="284"/>
    </location>
</feature>
<feature type="disulfide bond" evidence="1">
    <location>
        <begin position="360"/>
        <end position="406"/>
    </location>
</feature>
<evidence type="ECO:0000250" key="1">
    <source>
        <dbReference type="UniProtKB" id="W3VKA4"/>
    </source>
</evidence>
<evidence type="ECO:0000255" key="2"/>
<evidence type="ECO:0000255" key="3">
    <source>
        <dbReference type="PROSITE-ProRule" id="PRU00498"/>
    </source>
</evidence>
<evidence type="ECO:0000269" key="4">
    <source>
    </source>
</evidence>
<evidence type="ECO:0000269" key="5">
    <source>
    </source>
</evidence>
<evidence type="ECO:0000303" key="6">
    <source>
    </source>
</evidence>
<evidence type="ECO:0000305" key="7"/>
<evidence type="ECO:0000305" key="8">
    <source>
    </source>
</evidence>
<accession>A8PX35</accession>
<protein>
    <recommendedName>
        <fullName evidence="6">Secreted triacylglycerol lipase LIP4</fullName>
        <ecNumber evidence="5">3.1.1.-</ecNumber>
        <ecNumber evidence="5">3.1.1.3</ecNumber>
    </recommendedName>
</protein>